<gene>
    <name evidence="1" type="primary">glyS</name>
    <name type="ordered locus">SG0012</name>
</gene>
<comment type="catalytic activity">
    <reaction evidence="1">
        <text>tRNA(Gly) + glycine + ATP = glycyl-tRNA(Gly) + AMP + diphosphate</text>
        <dbReference type="Rhea" id="RHEA:16013"/>
        <dbReference type="Rhea" id="RHEA-COMP:9664"/>
        <dbReference type="Rhea" id="RHEA-COMP:9683"/>
        <dbReference type="ChEBI" id="CHEBI:30616"/>
        <dbReference type="ChEBI" id="CHEBI:33019"/>
        <dbReference type="ChEBI" id="CHEBI:57305"/>
        <dbReference type="ChEBI" id="CHEBI:78442"/>
        <dbReference type="ChEBI" id="CHEBI:78522"/>
        <dbReference type="ChEBI" id="CHEBI:456215"/>
        <dbReference type="EC" id="6.1.1.14"/>
    </reaction>
</comment>
<comment type="subunit">
    <text evidence="1">Tetramer of two alpha and two beta subunits.</text>
</comment>
<comment type="subcellular location">
    <subcellularLocation>
        <location evidence="1">Cytoplasm</location>
    </subcellularLocation>
</comment>
<comment type="similarity">
    <text evidence="1">Belongs to the class-II aminoacyl-tRNA synthetase family.</text>
</comment>
<evidence type="ECO:0000255" key="1">
    <source>
        <dbReference type="HAMAP-Rule" id="MF_00255"/>
    </source>
</evidence>
<keyword id="KW-0030">Aminoacyl-tRNA synthetase</keyword>
<keyword id="KW-0067">ATP-binding</keyword>
<keyword id="KW-0963">Cytoplasm</keyword>
<keyword id="KW-0436">Ligase</keyword>
<keyword id="KW-0547">Nucleotide-binding</keyword>
<keyword id="KW-0648">Protein biosynthesis</keyword>
<reference key="1">
    <citation type="journal article" date="2006" name="Genome Res.">
        <title>Massive genome erosion and functional adaptations provide insights into the symbiotic lifestyle of Sodalis glossinidius in the tsetse host.</title>
        <authorList>
            <person name="Toh H."/>
            <person name="Weiss B.L."/>
            <person name="Perkin S.A.H."/>
            <person name="Yamashita A."/>
            <person name="Oshima K."/>
            <person name="Hattori M."/>
            <person name="Aksoy S."/>
        </authorList>
    </citation>
    <scope>NUCLEOTIDE SEQUENCE [LARGE SCALE GENOMIC DNA]</scope>
    <source>
        <strain>morsitans</strain>
    </source>
</reference>
<accession>Q2NX38</accession>
<sequence length="689" mass="76438">MTQHTFLVEIGTEELPPKALRALAEAFAIHISGELDAANVRHGEVSWFAAPRRLAVKVAALGGAQADSDVEKRGPAIAQVFDADGNPTKAAEGWARGCGITVSQAERLATDKGEWLVYRARVKGQPVQELLCAVVSRALGKLPIPKMMRWGDNETQFIRPVHTVTLLLDDGVIAGNVLGIDADRIVRGHRFMGEREISLEHADQYPQVLLDRGRVMADYLQRKETIRRDAEEAAKRLGGVADLSESLLEEVTSLVEWPVVLTARFEEKFLAVPAEALVYTMKGDQKYFPVYDAAGNLLPHFIFVANIESKDPQQIIAGNEKVVRPRLADAEFFFNTDHKQRLEDRLPRLDTVLFQKQLGTLRDKSDRIEALSAWIAGRIGADVPQAARAGLLSKCDLMTNMVFEFTDTQGVMGMHYARHDGEPEAVALAQKEQYQPRFAGDALPTTLVSCAVAIADKMDTLAGIFGIGQHPKGDKDPFALRRATLGVLRIIVEKQLPLDLQTLTEEAVRLYGEKLTNDAVVNDVIDFMLGRFRAWYQEQGHSVDTIQAVLARRPTRPADFDARVRAVSYFRTLEEAASLAAANKRVSNILAKSDDPVYKDLQASVLKDPSEITLATHLVVLREKLQPLFEAGRYQDALVELAALREPVDAFFDSVMVMADDPQVRINRLTLLAQLRKLFLQVADISLLQ</sequence>
<name>SYGB_SODGM</name>
<proteinExistence type="inferred from homology"/>
<organism>
    <name type="scientific">Sodalis glossinidius (strain morsitans)</name>
    <dbReference type="NCBI Taxonomy" id="343509"/>
    <lineage>
        <taxon>Bacteria</taxon>
        <taxon>Pseudomonadati</taxon>
        <taxon>Pseudomonadota</taxon>
        <taxon>Gammaproteobacteria</taxon>
        <taxon>Enterobacterales</taxon>
        <taxon>Bruguierivoracaceae</taxon>
        <taxon>Sodalis</taxon>
    </lineage>
</organism>
<protein>
    <recommendedName>
        <fullName evidence="1">Glycine--tRNA ligase beta subunit</fullName>
        <ecNumber evidence="1">6.1.1.14</ecNumber>
    </recommendedName>
    <alternativeName>
        <fullName evidence="1">Glycyl-tRNA synthetase beta subunit</fullName>
        <shortName evidence="1">GlyRS</shortName>
    </alternativeName>
</protein>
<feature type="chain" id="PRO_1000006416" description="Glycine--tRNA ligase beta subunit">
    <location>
        <begin position="1"/>
        <end position="689"/>
    </location>
</feature>
<dbReference type="EC" id="6.1.1.14" evidence="1"/>
<dbReference type="EMBL" id="AP008232">
    <property type="protein sequence ID" value="BAE73287.1"/>
    <property type="molecule type" value="Genomic_DNA"/>
</dbReference>
<dbReference type="RefSeq" id="WP_011409877.1">
    <property type="nucleotide sequence ID" value="NC_007712.1"/>
</dbReference>
<dbReference type="SMR" id="Q2NX38"/>
<dbReference type="STRING" id="343509.SG0012"/>
<dbReference type="KEGG" id="sgl:SG0012"/>
<dbReference type="eggNOG" id="COG0751">
    <property type="taxonomic scope" value="Bacteria"/>
</dbReference>
<dbReference type="HOGENOM" id="CLU_007220_2_2_6"/>
<dbReference type="OrthoDB" id="9775440at2"/>
<dbReference type="BioCyc" id="SGLO343509:SGP1_RS00135-MONOMER"/>
<dbReference type="Proteomes" id="UP000001932">
    <property type="component" value="Chromosome"/>
</dbReference>
<dbReference type="GO" id="GO:0005829">
    <property type="term" value="C:cytosol"/>
    <property type="evidence" value="ECO:0007669"/>
    <property type="project" value="TreeGrafter"/>
</dbReference>
<dbReference type="GO" id="GO:0004814">
    <property type="term" value="F:arginine-tRNA ligase activity"/>
    <property type="evidence" value="ECO:0007669"/>
    <property type="project" value="InterPro"/>
</dbReference>
<dbReference type="GO" id="GO:0005524">
    <property type="term" value="F:ATP binding"/>
    <property type="evidence" value="ECO:0007669"/>
    <property type="project" value="UniProtKB-UniRule"/>
</dbReference>
<dbReference type="GO" id="GO:0004820">
    <property type="term" value="F:glycine-tRNA ligase activity"/>
    <property type="evidence" value="ECO:0007669"/>
    <property type="project" value="UniProtKB-UniRule"/>
</dbReference>
<dbReference type="GO" id="GO:0006420">
    <property type="term" value="P:arginyl-tRNA aminoacylation"/>
    <property type="evidence" value="ECO:0007669"/>
    <property type="project" value="InterPro"/>
</dbReference>
<dbReference type="GO" id="GO:0006426">
    <property type="term" value="P:glycyl-tRNA aminoacylation"/>
    <property type="evidence" value="ECO:0007669"/>
    <property type="project" value="UniProtKB-UniRule"/>
</dbReference>
<dbReference type="HAMAP" id="MF_00255">
    <property type="entry name" value="Gly_tRNA_synth_beta"/>
    <property type="match status" value="1"/>
</dbReference>
<dbReference type="InterPro" id="IPR008909">
    <property type="entry name" value="DALR_anticod-bd"/>
</dbReference>
<dbReference type="InterPro" id="IPR015944">
    <property type="entry name" value="Gly-tRNA-synth_bsu"/>
</dbReference>
<dbReference type="InterPro" id="IPR006194">
    <property type="entry name" value="Gly-tRNA-synth_heterodimer"/>
</dbReference>
<dbReference type="NCBIfam" id="TIGR00211">
    <property type="entry name" value="glyS"/>
    <property type="match status" value="1"/>
</dbReference>
<dbReference type="PANTHER" id="PTHR30075:SF2">
    <property type="entry name" value="GLYCINE--TRNA LIGASE, CHLOROPLASTIC_MITOCHONDRIAL 2"/>
    <property type="match status" value="1"/>
</dbReference>
<dbReference type="PANTHER" id="PTHR30075">
    <property type="entry name" value="GLYCYL-TRNA SYNTHETASE"/>
    <property type="match status" value="1"/>
</dbReference>
<dbReference type="Pfam" id="PF05746">
    <property type="entry name" value="DALR_1"/>
    <property type="match status" value="1"/>
</dbReference>
<dbReference type="Pfam" id="PF02092">
    <property type="entry name" value="tRNA_synt_2f"/>
    <property type="match status" value="1"/>
</dbReference>
<dbReference type="PRINTS" id="PR01045">
    <property type="entry name" value="TRNASYNTHGB"/>
</dbReference>
<dbReference type="SUPFAM" id="SSF109604">
    <property type="entry name" value="HD-domain/PDEase-like"/>
    <property type="match status" value="1"/>
</dbReference>
<dbReference type="PROSITE" id="PS50861">
    <property type="entry name" value="AA_TRNA_LIGASE_II_GLYAB"/>
    <property type="match status" value="1"/>
</dbReference>